<evidence type="ECO:0000255" key="1">
    <source>
        <dbReference type="HAMAP-Rule" id="MF_00023"/>
    </source>
</evidence>
<keyword id="KW-0963">Cytoplasm</keyword>
<keyword id="KW-1185">Reference proteome</keyword>
<keyword id="KW-0694">RNA-binding</keyword>
<gene>
    <name evidence="1" type="primary">smpB</name>
    <name type="ordered locus">Francci3_0801</name>
</gene>
<accession>Q2JEV7</accession>
<organism>
    <name type="scientific">Frankia casuarinae (strain DSM 45818 / CECT 9043 / HFP020203 / CcI3)</name>
    <dbReference type="NCBI Taxonomy" id="106370"/>
    <lineage>
        <taxon>Bacteria</taxon>
        <taxon>Bacillati</taxon>
        <taxon>Actinomycetota</taxon>
        <taxon>Actinomycetes</taxon>
        <taxon>Frankiales</taxon>
        <taxon>Frankiaceae</taxon>
        <taxon>Frankia</taxon>
    </lineage>
</organism>
<protein>
    <recommendedName>
        <fullName evidence="1">SsrA-binding protein</fullName>
    </recommendedName>
    <alternativeName>
        <fullName evidence="1">Small protein B</fullName>
    </alternativeName>
</protein>
<comment type="function">
    <text evidence="1">Required for rescue of stalled ribosomes mediated by trans-translation. Binds to transfer-messenger RNA (tmRNA), required for stable association of tmRNA with ribosomes. tmRNA and SmpB together mimic tRNA shape, replacing the anticodon stem-loop with SmpB. tmRNA is encoded by the ssrA gene; the 2 termini fold to resemble tRNA(Ala) and it encodes a 'tag peptide', a short internal open reading frame. During trans-translation Ala-aminoacylated tmRNA acts like a tRNA, entering the A-site of stalled ribosomes, displacing the stalled mRNA. The ribosome then switches to translate the ORF on the tmRNA; the nascent peptide is terminated with the 'tag peptide' encoded by the tmRNA and targeted for degradation. The ribosome is freed to recommence translation, which seems to be the essential function of trans-translation.</text>
</comment>
<comment type="subcellular location">
    <subcellularLocation>
        <location evidence="1">Cytoplasm</location>
    </subcellularLocation>
    <text evidence="1">The tmRNA-SmpB complex associates with stalled 70S ribosomes.</text>
</comment>
<comment type="similarity">
    <text evidence="1">Belongs to the SmpB family.</text>
</comment>
<sequence>MPRETGRRLIAQNKRARHDYDILDTYEAGLVLRGTEVKALRAGRASLVDGFAQISDGEIWLHNVHIPEYTEGTWTNHAPRRKRKMLLHRAEIEKLVGKTQEGGLTLVPLSLYWKDGRAKIEIALARGRKSYDKRHAIAERDAAREIGRAMGRRAKGRYL</sequence>
<name>SSRP_FRACC</name>
<feature type="chain" id="PRO_1000002056" description="SsrA-binding protein">
    <location>
        <begin position="1"/>
        <end position="159"/>
    </location>
</feature>
<dbReference type="EMBL" id="CP000249">
    <property type="protein sequence ID" value="ABD10185.1"/>
    <property type="molecule type" value="Genomic_DNA"/>
</dbReference>
<dbReference type="RefSeq" id="WP_011435254.1">
    <property type="nucleotide sequence ID" value="NZ_LRTJ01000022.1"/>
</dbReference>
<dbReference type="SMR" id="Q2JEV7"/>
<dbReference type="STRING" id="106370.Francci3_0801"/>
<dbReference type="KEGG" id="fra:Francci3_0801"/>
<dbReference type="eggNOG" id="COG0691">
    <property type="taxonomic scope" value="Bacteria"/>
</dbReference>
<dbReference type="HOGENOM" id="CLU_108953_0_0_11"/>
<dbReference type="OrthoDB" id="9805462at2"/>
<dbReference type="PhylomeDB" id="Q2JEV7"/>
<dbReference type="Proteomes" id="UP000001937">
    <property type="component" value="Chromosome"/>
</dbReference>
<dbReference type="GO" id="GO:0005829">
    <property type="term" value="C:cytosol"/>
    <property type="evidence" value="ECO:0007669"/>
    <property type="project" value="TreeGrafter"/>
</dbReference>
<dbReference type="GO" id="GO:0003723">
    <property type="term" value="F:RNA binding"/>
    <property type="evidence" value="ECO:0007669"/>
    <property type="project" value="UniProtKB-UniRule"/>
</dbReference>
<dbReference type="GO" id="GO:0070929">
    <property type="term" value="P:trans-translation"/>
    <property type="evidence" value="ECO:0007669"/>
    <property type="project" value="UniProtKB-UniRule"/>
</dbReference>
<dbReference type="CDD" id="cd09294">
    <property type="entry name" value="SmpB"/>
    <property type="match status" value="1"/>
</dbReference>
<dbReference type="Gene3D" id="2.40.280.10">
    <property type="match status" value="1"/>
</dbReference>
<dbReference type="HAMAP" id="MF_00023">
    <property type="entry name" value="SmpB"/>
    <property type="match status" value="1"/>
</dbReference>
<dbReference type="InterPro" id="IPR023620">
    <property type="entry name" value="SmpB"/>
</dbReference>
<dbReference type="InterPro" id="IPR000037">
    <property type="entry name" value="SsrA-bd_prot"/>
</dbReference>
<dbReference type="InterPro" id="IPR020081">
    <property type="entry name" value="SsrA-bd_prot_CS"/>
</dbReference>
<dbReference type="NCBIfam" id="NF003843">
    <property type="entry name" value="PRK05422.1"/>
    <property type="match status" value="1"/>
</dbReference>
<dbReference type="NCBIfam" id="TIGR00086">
    <property type="entry name" value="smpB"/>
    <property type="match status" value="1"/>
</dbReference>
<dbReference type="PANTHER" id="PTHR30308:SF2">
    <property type="entry name" value="SSRA-BINDING PROTEIN"/>
    <property type="match status" value="1"/>
</dbReference>
<dbReference type="PANTHER" id="PTHR30308">
    <property type="entry name" value="TMRNA-BINDING COMPONENT OF TRANS-TRANSLATION TAGGING COMPLEX"/>
    <property type="match status" value="1"/>
</dbReference>
<dbReference type="Pfam" id="PF01668">
    <property type="entry name" value="SmpB"/>
    <property type="match status" value="1"/>
</dbReference>
<dbReference type="SUPFAM" id="SSF74982">
    <property type="entry name" value="Small protein B (SmpB)"/>
    <property type="match status" value="1"/>
</dbReference>
<dbReference type="PROSITE" id="PS01317">
    <property type="entry name" value="SSRP"/>
    <property type="match status" value="1"/>
</dbReference>
<proteinExistence type="inferred from homology"/>
<reference key="1">
    <citation type="journal article" date="2007" name="Genome Res.">
        <title>Genome characteristics of facultatively symbiotic Frankia sp. strains reflect host range and host plant biogeography.</title>
        <authorList>
            <person name="Normand P."/>
            <person name="Lapierre P."/>
            <person name="Tisa L.S."/>
            <person name="Gogarten J.P."/>
            <person name="Alloisio N."/>
            <person name="Bagnarol E."/>
            <person name="Bassi C.A."/>
            <person name="Berry A.M."/>
            <person name="Bickhart D.M."/>
            <person name="Choisne N."/>
            <person name="Couloux A."/>
            <person name="Cournoyer B."/>
            <person name="Cruveiller S."/>
            <person name="Daubin V."/>
            <person name="Demange N."/>
            <person name="Francino M.P."/>
            <person name="Goltsman E."/>
            <person name="Huang Y."/>
            <person name="Kopp O.R."/>
            <person name="Labarre L."/>
            <person name="Lapidus A."/>
            <person name="Lavire C."/>
            <person name="Marechal J."/>
            <person name="Martinez M."/>
            <person name="Mastronunzio J.E."/>
            <person name="Mullin B.C."/>
            <person name="Niemann J."/>
            <person name="Pujic P."/>
            <person name="Rawnsley T."/>
            <person name="Rouy Z."/>
            <person name="Schenowitz C."/>
            <person name="Sellstedt A."/>
            <person name="Tavares F."/>
            <person name="Tomkins J.P."/>
            <person name="Vallenet D."/>
            <person name="Valverde C."/>
            <person name="Wall L.G."/>
            <person name="Wang Y."/>
            <person name="Medigue C."/>
            <person name="Benson D.R."/>
        </authorList>
    </citation>
    <scope>NUCLEOTIDE SEQUENCE [LARGE SCALE GENOMIC DNA]</scope>
    <source>
        <strain>DSM 45818 / CECT 9043 / HFP020203 / CcI3</strain>
    </source>
</reference>